<feature type="chain" id="PRO_1000092445" description="Elongation factor 4">
    <location>
        <begin position="1"/>
        <end position="599"/>
    </location>
</feature>
<feature type="domain" description="tr-type G">
    <location>
        <begin position="2"/>
        <end position="184"/>
    </location>
</feature>
<feature type="binding site" evidence="1">
    <location>
        <begin position="14"/>
        <end position="19"/>
    </location>
    <ligand>
        <name>GTP</name>
        <dbReference type="ChEBI" id="CHEBI:37565"/>
    </ligand>
</feature>
<feature type="binding site" evidence="1">
    <location>
        <begin position="131"/>
        <end position="134"/>
    </location>
    <ligand>
        <name>GTP</name>
        <dbReference type="ChEBI" id="CHEBI:37565"/>
    </ligand>
</feature>
<comment type="function">
    <text evidence="1">Required for accurate and efficient protein synthesis under certain stress conditions. May act as a fidelity factor of the translation reaction, by catalyzing a one-codon backward translocation of tRNAs on improperly translocated ribosomes. Back-translocation proceeds from a post-translocation (POST) complex to a pre-translocation (PRE) complex, thus giving elongation factor G a second chance to translocate the tRNAs correctly. Binds to ribosomes in a GTP-dependent manner.</text>
</comment>
<comment type="catalytic activity">
    <reaction evidence="1">
        <text>GTP + H2O = GDP + phosphate + H(+)</text>
        <dbReference type="Rhea" id="RHEA:19669"/>
        <dbReference type="ChEBI" id="CHEBI:15377"/>
        <dbReference type="ChEBI" id="CHEBI:15378"/>
        <dbReference type="ChEBI" id="CHEBI:37565"/>
        <dbReference type="ChEBI" id="CHEBI:43474"/>
        <dbReference type="ChEBI" id="CHEBI:58189"/>
        <dbReference type="EC" id="3.6.5.n1"/>
    </reaction>
</comment>
<comment type="subcellular location">
    <subcellularLocation>
        <location evidence="1">Cell inner membrane</location>
        <topology evidence="1">Peripheral membrane protein</topology>
        <orientation evidence="1">Cytoplasmic side</orientation>
    </subcellularLocation>
</comment>
<comment type="similarity">
    <text evidence="1">Belongs to the TRAFAC class translation factor GTPase superfamily. Classic translation factor GTPase family. LepA subfamily.</text>
</comment>
<accession>B4TS16</accession>
<dbReference type="EC" id="3.6.5.n1" evidence="1"/>
<dbReference type="EMBL" id="CP001127">
    <property type="protein sequence ID" value="ACF90314.1"/>
    <property type="molecule type" value="Genomic_DNA"/>
</dbReference>
<dbReference type="RefSeq" id="WP_000790154.1">
    <property type="nucleotide sequence ID" value="NC_011094.1"/>
</dbReference>
<dbReference type="SMR" id="B4TS16"/>
<dbReference type="KEGG" id="sew:SeSA_A2828"/>
<dbReference type="HOGENOM" id="CLU_009995_3_3_6"/>
<dbReference type="Proteomes" id="UP000001865">
    <property type="component" value="Chromosome"/>
</dbReference>
<dbReference type="GO" id="GO:0005886">
    <property type="term" value="C:plasma membrane"/>
    <property type="evidence" value="ECO:0007669"/>
    <property type="project" value="UniProtKB-SubCell"/>
</dbReference>
<dbReference type="GO" id="GO:0005525">
    <property type="term" value="F:GTP binding"/>
    <property type="evidence" value="ECO:0007669"/>
    <property type="project" value="UniProtKB-UniRule"/>
</dbReference>
<dbReference type="GO" id="GO:0003924">
    <property type="term" value="F:GTPase activity"/>
    <property type="evidence" value="ECO:0007669"/>
    <property type="project" value="UniProtKB-UniRule"/>
</dbReference>
<dbReference type="GO" id="GO:0097216">
    <property type="term" value="F:guanosine tetraphosphate binding"/>
    <property type="evidence" value="ECO:0007669"/>
    <property type="project" value="UniProtKB-ARBA"/>
</dbReference>
<dbReference type="GO" id="GO:0043022">
    <property type="term" value="F:ribosome binding"/>
    <property type="evidence" value="ECO:0007669"/>
    <property type="project" value="UniProtKB-UniRule"/>
</dbReference>
<dbReference type="GO" id="GO:0003746">
    <property type="term" value="F:translation elongation factor activity"/>
    <property type="evidence" value="ECO:0007669"/>
    <property type="project" value="UniProtKB-UniRule"/>
</dbReference>
<dbReference type="GO" id="GO:0045727">
    <property type="term" value="P:positive regulation of translation"/>
    <property type="evidence" value="ECO:0007669"/>
    <property type="project" value="UniProtKB-UniRule"/>
</dbReference>
<dbReference type="CDD" id="cd03699">
    <property type="entry name" value="EF4_II"/>
    <property type="match status" value="1"/>
</dbReference>
<dbReference type="CDD" id="cd16260">
    <property type="entry name" value="EF4_III"/>
    <property type="match status" value="1"/>
</dbReference>
<dbReference type="CDD" id="cd01890">
    <property type="entry name" value="LepA"/>
    <property type="match status" value="1"/>
</dbReference>
<dbReference type="CDD" id="cd03709">
    <property type="entry name" value="lepA_C"/>
    <property type="match status" value="1"/>
</dbReference>
<dbReference type="FunFam" id="3.30.70.240:FF:000005">
    <property type="entry name" value="Elongation factor 4"/>
    <property type="match status" value="1"/>
</dbReference>
<dbReference type="FunFam" id="3.40.50.300:FF:000078">
    <property type="entry name" value="Elongation factor 4"/>
    <property type="match status" value="1"/>
</dbReference>
<dbReference type="FunFam" id="2.40.30.10:FF:000015">
    <property type="entry name" value="Translation factor GUF1, mitochondrial"/>
    <property type="match status" value="1"/>
</dbReference>
<dbReference type="FunFam" id="3.30.70.2570:FF:000001">
    <property type="entry name" value="Translation factor GUF1, mitochondrial"/>
    <property type="match status" value="1"/>
</dbReference>
<dbReference type="FunFam" id="3.30.70.870:FF:000004">
    <property type="entry name" value="Translation factor GUF1, mitochondrial"/>
    <property type="match status" value="1"/>
</dbReference>
<dbReference type="Gene3D" id="3.30.70.240">
    <property type="match status" value="1"/>
</dbReference>
<dbReference type="Gene3D" id="3.30.70.2570">
    <property type="entry name" value="Elongation factor 4, C-terminal domain"/>
    <property type="match status" value="1"/>
</dbReference>
<dbReference type="Gene3D" id="3.30.70.870">
    <property type="entry name" value="Elongation Factor G (Translational Gtpase), domain 3"/>
    <property type="match status" value="1"/>
</dbReference>
<dbReference type="Gene3D" id="3.40.50.300">
    <property type="entry name" value="P-loop containing nucleotide triphosphate hydrolases"/>
    <property type="match status" value="1"/>
</dbReference>
<dbReference type="Gene3D" id="2.40.30.10">
    <property type="entry name" value="Translation factors"/>
    <property type="match status" value="1"/>
</dbReference>
<dbReference type="HAMAP" id="MF_00071">
    <property type="entry name" value="LepA"/>
    <property type="match status" value="1"/>
</dbReference>
<dbReference type="InterPro" id="IPR006297">
    <property type="entry name" value="EF-4"/>
</dbReference>
<dbReference type="InterPro" id="IPR035647">
    <property type="entry name" value="EFG_III/V"/>
</dbReference>
<dbReference type="InterPro" id="IPR000640">
    <property type="entry name" value="EFG_V-like"/>
</dbReference>
<dbReference type="InterPro" id="IPR004161">
    <property type="entry name" value="EFTu-like_2"/>
</dbReference>
<dbReference type="InterPro" id="IPR031157">
    <property type="entry name" value="G_TR_CS"/>
</dbReference>
<dbReference type="InterPro" id="IPR038363">
    <property type="entry name" value="LepA_C_sf"/>
</dbReference>
<dbReference type="InterPro" id="IPR013842">
    <property type="entry name" value="LepA_CTD"/>
</dbReference>
<dbReference type="InterPro" id="IPR035654">
    <property type="entry name" value="LepA_IV"/>
</dbReference>
<dbReference type="InterPro" id="IPR027417">
    <property type="entry name" value="P-loop_NTPase"/>
</dbReference>
<dbReference type="InterPro" id="IPR005225">
    <property type="entry name" value="Small_GTP-bd"/>
</dbReference>
<dbReference type="InterPro" id="IPR000795">
    <property type="entry name" value="T_Tr_GTP-bd_dom"/>
</dbReference>
<dbReference type="NCBIfam" id="TIGR01393">
    <property type="entry name" value="lepA"/>
    <property type="match status" value="1"/>
</dbReference>
<dbReference type="NCBIfam" id="TIGR00231">
    <property type="entry name" value="small_GTP"/>
    <property type="match status" value="1"/>
</dbReference>
<dbReference type="PANTHER" id="PTHR43512:SF4">
    <property type="entry name" value="TRANSLATION FACTOR GUF1 HOMOLOG, CHLOROPLASTIC"/>
    <property type="match status" value="1"/>
</dbReference>
<dbReference type="PANTHER" id="PTHR43512">
    <property type="entry name" value="TRANSLATION FACTOR GUF1-RELATED"/>
    <property type="match status" value="1"/>
</dbReference>
<dbReference type="Pfam" id="PF00679">
    <property type="entry name" value="EFG_C"/>
    <property type="match status" value="1"/>
</dbReference>
<dbReference type="Pfam" id="PF00009">
    <property type="entry name" value="GTP_EFTU"/>
    <property type="match status" value="1"/>
</dbReference>
<dbReference type="Pfam" id="PF03144">
    <property type="entry name" value="GTP_EFTU_D2"/>
    <property type="match status" value="1"/>
</dbReference>
<dbReference type="Pfam" id="PF06421">
    <property type="entry name" value="LepA_C"/>
    <property type="match status" value="1"/>
</dbReference>
<dbReference type="PRINTS" id="PR00315">
    <property type="entry name" value="ELONGATNFCT"/>
</dbReference>
<dbReference type="SUPFAM" id="SSF54980">
    <property type="entry name" value="EF-G C-terminal domain-like"/>
    <property type="match status" value="2"/>
</dbReference>
<dbReference type="SUPFAM" id="SSF52540">
    <property type="entry name" value="P-loop containing nucleoside triphosphate hydrolases"/>
    <property type="match status" value="1"/>
</dbReference>
<dbReference type="PROSITE" id="PS00301">
    <property type="entry name" value="G_TR_1"/>
    <property type="match status" value="1"/>
</dbReference>
<dbReference type="PROSITE" id="PS51722">
    <property type="entry name" value="G_TR_2"/>
    <property type="match status" value="1"/>
</dbReference>
<gene>
    <name evidence="1" type="primary">lepA</name>
    <name type="ordered locus">SeSA_A2828</name>
</gene>
<protein>
    <recommendedName>
        <fullName evidence="1">Elongation factor 4</fullName>
        <shortName evidence="1">EF-4</shortName>
        <ecNumber evidence="1">3.6.5.n1</ecNumber>
    </recommendedName>
    <alternativeName>
        <fullName evidence="1">Ribosomal back-translocase LepA</fullName>
    </alternativeName>
</protein>
<proteinExistence type="inferred from homology"/>
<reference key="1">
    <citation type="journal article" date="2011" name="J. Bacteriol.">
        <title>Comparative genomics of 28 Salmonella enterica isolates: evidence for CRISPR-mediated adaptive sublineage evolution.</title>
        <authorList>
            <person name="Fricke W.F."/>
            <person name="Mammel M.K."/>
            <person name="McDermott P.F."/>
            <person name="Tartera C."/>
            <person name="White D.G."/>
            <person name="Leclerc J.E."/>
            <person name="Ravel J."/>
            <person name="Cebula T.A."/>
        </authorList>
    </citation>
    <scope>NUCLEOTIDE SEQUENCE [LARGE SCALE GENOMIC DNA]</scope>
    <source>
        <strain>CVM19633</strain>
    </source>
</reference>
<keyword id="KW-0997">Cell inner membrane</keyword>
<keyword id="KW-1003">Cell membrane</keyword>
<keyword id="KW-0342">GTP-binding</keyword>
<keyword id="KW-0378">Hydrolase</keyword>
<keyword id="KW-0472">Membrane</keyword>
<keyword id="KW-0547">Nucleotide-binding</keyword>
<keyword id="KW-0648">Protein biosynthesis</keyword>
<organism>
    <name type="scientific">Salmonella schwarzengrund (strain CVM19633)</name>
    <dbReference type="NCBI Taxonomy" id="439843"/>
    <lineage>
        <taxon>Bacteria</taxon>
        <taxon>Pseudomonadati</taxon>
        <taxon>Pseudomonadota</taxon>
        <taxon>Gammaproteobacteria</taxon>
        <taxon>Enterobacterales</taxon>
        <taxon>Enterobacteriaceae</taxon>
        <taxon>Salmonella</taxon>
    </lineage>
</organism>
<sequence>MKNIRNFSIIAHIDHGKSTLSDRIIQICGGLSDREMEAQVLDSMDLERERGITIKAQSVTLDFKASDGETYQLNFIDTPGHVDFSYEVSRSLAACEGALLVVDAGQGVEAQTLANCYTAMEMDLEVVPVLNKIDLPAADPERVAEEIEDIVGIDATDAVRCSAKTGVGVTDVLERLVRDIPPPQGDPDGPLQALIIDSWFDNYLGVVSLVRIKNGTMRKGDKIKVMSTGQTYNADRLGIFTPKQVDRTELKCGEVGWLVCAIKDILGAPVGDTLTSARNPAEKALPGFKKVKPQVYAGLFPVSSDDYESFRDALGKLSLNDASLFYEPESSSALGFGFRCGFLGLLHMEIIQERLEREYDLDLITTAPTVVYEVETTAKETIYVDSPSKLPPLNNIYELREPIAECHMLLPQAYLGNVITLCIEKRGVQTNMVYHGNQVALTYEIPMAEVVLDFFDRLKSTSRGYASLDYNFKRFQASDMVRVDVLINNERVDALALITHRDNSQSRGRELVEKMKDLIPRQQFDIAIQAAIGTHIIARSTVKQLRKNVLAKCYGGDISRKKKLLQKQKEGKKRMKQIGNVELPQEAFLAILHVGKDNK</sequence>
<evidence type="ECO:0000255" key="1">
    <source>
        <dbReference type="HAMAP-Rule" id="MF_00071"/>
    </source>
</evidence>
<name>LEPA_SALSV</name>